<dbReference type="EMBL" id="CP001139">
    <property type="protein sequence ID" value="ACH66007.1"/>
    <property type="molecule type" value="Genomic_DNA"/>
</dbReference>
<dbReference type="RefSeq" id="WP_012533429.1">
    <property type="nucleotide sequence ID" value="NC_011184.1"/>
</dbReference>
<dbReference type="SMR" id="B5FFP5"/>
<dbReference type="KEGG" id="vfm:VFMJ11_1830"/>
<dbReference type="HOGENOM" id="CLU_067812_0_1_6"/>
<dbReference type="Proteomes" id="UP000001857">
    <property type="component" value="Chromosome I"/>
</dbReference>
<dbReference type="GO" id="GO:0000902">
    <property type="term" value="P:cell morphogenesis"/>
    <property type="evidence" value="ECO:0007669"/>
    <property type="project" value="InterPro"/>
</dbReference>
<dbReference type="GO" id="GO:0000917">
    <property type="term" value="P:division septum assembly"/>
    <property type="evidence" value="ECO:0007669"/>
    <property type="project" value="UniProtKB-KW"/>
</dbReference>
<dbReference type="GO" id="GO:0051302">
    <property type="term" value="P:regulation of cell division"/>
    <property type="evidence" value="ECO:0007669"/>
    <property type="project" value="InterPro"/>
</dbReference>
<dbReference type="GO" id="GO:1901891">
    <property type="term" value="P:regulation of cell septum assembly"/>
    <property type="evidence" value="ECO:0007669"/>
    <property type="project" value="InterPro"/>
</dbReference>
<dbReference type="Gene3D" id="2.160.20.70">
    <property type="match status" value="1"/>
</dbReference>
<dbReference type="Gene3D" id="3.30.70.260">
    <property type="match status" value="1"/>
</dbReference>
<dbReference type="HAMAP" id="MF_00267">
    <property type="entry name" value="MinC"/>
    <property type="match status" value="1"/>
</dbReference>
<dbReference type="InterPro" id="IPR016098">
    <property type="entry name" value="CAP/MinC_C"/>
</dbReference>
<dbReference type="InterPro" id="IPR013033">
    <property type="entry name" value="MinC"/>
</dbReference>
<dbReference type="InterPro" id="IPR036145">
    <property type="entry name" value="MinC_C_sf"/>
</dbReference>
<dbReference type="InterPro" id="IPR007874">
    <property type="entry name" value="MinC_N"/>
</dbReference>
<dbReference type="InterPro" id="IPR005526">
    <property type="entry name" value="Septum_form_inhib_MinC_C"/>
</dbReference>
<dbReference type="NCBIfam" id="TIGR01222">
    <property type="entry name" value="minC"/>
    <property type="match status" value="1"/>
</dbReference>
<dbReference type="PANTHER" id="PTHR34108">
    <property type="entry name" value="SEPTUM SITE-DETERMINING PROTEIN MINC"/>
    <property type="match status" value="1"/>
</dbReference>
<dbReference type="PANTHER" id="PTHR34108:SF1">
    <property type="entry name" value="SEPTUM SITE-DETERMINING PROTEIN MINC"/>
    <property type="match status" value="1"/>
</dbReference>
<dbReference type="Pfam" id="PF03775">
    <property type="entry name" value="MinC_C"/>
    <property type="match status" value="1"/>
</dbReference>
<dbReference type="Pfam" id="PF05209">
    <property type="entry name" value="MinC_N"/>
    <property type="match status" value="1"/>
</dbReference>
<dbReference type="SUPFAM" id="SSF63848">
    <property type="entry name" value="Cell-division inhibitor MinC, C-terminal domain"/>
    <property type="match status" value="1"/>
</dbReference>
<keyword id="KW-0131">Cell cycle</keyword>
<keyword id="KW-0132">Cell division</keyword>
<keyword id="KW-0717">Septation</keyword>
<evidence type="ECO:0000255" key="1">
    <source>
        <dbReference type="HAMAP-Rule" id="MF_00267"/>
    </source>
</evidence>
<sequence>MTKTADLKGSNFTLSVLHLPNDDVALALNMLEQKVAQAPSFFASAPVVVNIENVSNEINFVELKSGVERTGMIPVGITGCKDKEKQAQATAAGFAIMTSFTPQQVTQKANMQPTKVIKTPIRSGQQIYAKDADLVILNHVSPGAEVIADGSIHIHGTLRGRAIAGASGQAEAKVFCKNLQAELISIAGNYWLSDQIDKEYWHQNVMITMVEDRIQIDTLTL</sequence>
<proteinExistence type="inferred from homology"/>
<accession>B5FFP5</accession>
<reference key="1">
    <citation type="submission" date="2008-08" db="EMBL/GenBank/DDBJ databases">
        <title>Complete sequence of Vibrio fischeri strain MJ11.</title>
        <authorList>
            <person name="Mandel M.J."/>
            <person name="Stabb E.V."/>
            <person name="Ruby E.G."/>
            <person name="Ferriera S."/>
            <person name="Johnson J."/>
            <person name="Kravitz S."/>
            <person name="Beeson K."/>
            <person name="Sutton G."/>
            <person name="Rogers Y.-H."/>
            <person name="Friedman R."/>
            <person name="Frazier M."/>
            <person name="Venter J.C."/>
        </authorList>
    </citation>
    <scope>NUCLEOTIDE SEQUENCE [LARGE SCALE GENOMIC DNA]</scope>
    <source>
        <strain>MJ11</strain>
    </source>
</reference>
<gene>
    <name evidence="1" type="primary">minC</name>
    <name type="ordered locus">VFMJ11_1830</name>
</gene>
<feature type="chain" id="PRO_1000114299" description="Probable septum site-determining protein MinC">
    <location>
        <begin position="1"/>
        <end position="221"/>
    </location>
</feature>
<name>MINC_ALIFM</name>
<comment type="function">
    <text evidence="1">Cell division inhibitor that blocks the formation of polar Z ring septums. Rapidly oscillates between the poles of the cell to destabilize FtsZ filaments that have formed before they mature into polar Z rings. Prevents FtsZ polymerization.</text>
</comment>
<comment type="subunit">
    <text evidence="1">Interacts with MinD and FtsZ.</text>
</comment>
<comment type="similarity">
    <text evidence="1">Belongs to the MinC family.</text>
</comment>
<protein>
    <recommendedName>
        <fullName evidence="1">Probable septum site-determining protein MinC</fullName>
    </recommendedName>
</protein>
<organism>
    <name type="scientific">Aliivibrio fischeri (strain MJ11)</name>
    <name type="common">Vibrio fischeri</name>
    <dbReference type="NCBI Taxonomy" id="388396"/>
    <lineage>
        <taxon>Bacteria</taxon>
        <taxon>Pseudomonadati</taxon>
        <taxon>Pseudomonadota</taxon>
        <taxon>Gammaproteobacteria</taxon>
        <taxon>Vibrionales</taxon>
        <taxon>Vibrionaceae</taxon>
        <taxon>Aliivibrio</taxon>
    </lineage>
</organism>